<dbReference type="EMBL" id="CP001176">
    <property type="protein sequence ID" value="ACK59445.1"/>
    <property type="molecule type" value="Genomic_DNA"/>
</dbReference>
<dbReference type="RefSeq" id="WP_000516465.1">
    <property type="nucleotide sequence ID" value="NZ_VEHB01000002.1"/>
</dbReference>
<dbReference type="SMR" id="B7HDP3"/>
<dbReference type="KEGG" id="bcb:BCB4264_A3867"/>
<dbReference type="HOGENOM" id="CLU_004131_4_1_9"/>
<dbReference type="Proteomes" id="UP000007096">
    <property type="component" value="Chromosome"/>
</dbReference>
<dbReference type="GO" id="GO:0032300">
    <property type="term" value="C:mismatch repair complex"/>
    <property type="evidence" value="ECO:0007669"/>
    <property type="project" value="InterPro"/>
</dbReference>
<dbReference type="GO" id="GO:0005524">
    <property type="term" value="F:ATP binding"/>
    <property type="evidence" value="ECO:0007669"/>
    <property type="project" value="InterPro"/>
</dbReference>
<dbReference type="GO" id="GO:0016887">
    <property type="term" value="F:ATP hydrolysis activity"/>
    <property type="evidence" value="ECO:0007669"/>
    <property type="project" value="InterPro"/>
</dbReference>
<dbReference type="GO" id="GO:0140664">
    <property type="term" value="F:ATP-dependent DNA damage sensor activity"/>
    <property type="evidence" value="ECO:0007669"/>
    <property type="project" value="InterPro"/>
</dbReference>
<dbReference type="GO" id="GO:0030983">
    <property type="term" value="F:mismatched DNA binding"/>
    <property type="evidence" value="ECO:0007669"/>
    <property type="project" value="InterPro"/>
</dbReference>
<dbReference type="GO" id="GO:0006298">
    <property type="term" value="P:mismatch repair"/>
    <property type="evidence" value="ECO:0007669"/>
    <property type="project" value="UniProtKB-UniRule"/>
</dbReference>
<dbReference type="CDD" id="cd16926">
    <property type="entry name" value="HATPase_MutL-MLH-PMS-like"/>
    <property type="match status" value="1"/>
</dbReference>
<dbReference type="CDD" id="cd00782">
    <property type="entry name" value="MutL_Trans"/>
    <property type="match status" value="1"/>
</dbReference>
<dbReference type="FunFam" id="3.30.1370.100:FF:000004">
    <property type="entry name" value="DNA mismatch repair endonuclease MutL"/>
    <property type="match status" value="1"/>
</dbReference>
<dbReference type="FunFam" id="3.30.230.10:FF:000036">
    <property type="entry name" value="DNA mismatch repair endonuclease MutL"/>
    <property type="match status" value="1"/>
</dbReference>
<dbReference type="FunFam" id="3.30.565.10:FF:000003">
    <property type="entry name" value="DNA mismatch repair endonuclease MutL"/>
    <property type="match status" value="1"/>
</dbReference>
<dbReference type="Gene3D" id="3.30.230.10">
    <property type="match status" value="1"/>
</dbReference>
<dbReference type="Gene3D" id="3.30.565.10">
    <property type="entry name" value="Histidine kinase-like ATPase, C-terminal domain"/>
    <property type="match status" value="1"/>
</dbReference>
<dbReference type="Gene3D" id="3.30.1540.20">
    <property type="entry name" value="MutL, C-terminal domain, dimerisation subdomain"/>
    <property type="match status" value="1"/>
</dbReference>
<dbReference type="Gene3D" id="3.30.1370.100">
    <property type="entry name" value="MutL, C-terminal domain, regulatory subdomain"/>
    <property type="match status" value="1"/>
</dbReference>
<dbReference type="HAMAP" id="MF_00149">
    <property type="entry name" value="DNA_mis_repair"/>
    <property type="match status" value="1"/>
</dbReference>
<dbReference type="InterPro" id="IPR014762">
    <property type="entry name" value="DNA_mismatch_repair_CS"/>
</dbReference>
<dbReference type="InterPro" id="IPR020667">
    <property type="entry name" value="DNA_mismatch_repair_MutL"/>
</dbReference>
<dbReference type="InterPro" id="IPR013507">
    <property type="entry name" value="DNA_mismatch_S5_2-like"/>
</dbReference>
<dbReference type="InterPro" id="IPR036890">
    <property type="entry name" value="HATPase_C_sf"/>
</dbReference>
<dbReference type="InterPro" id="IPR002099">
    <property type="entry name" value="MutL/Mlh/PMS"/>
</dbReference>
<dbReference type="InterPro" id="IPR038973">
    <property type="entry name" value="MutL/Mlh/Pms-like"/>
</dbReference>
<dbReference type="InterPro" id="IPR014790">
    <property type="entry name" value="MutL_C"/>
</dbReference>
<dbReference type="InterPro" id="IPR042120">
    <property type="entry name" value="MutL_C_dimsub"/>
</dbReference>
<dbReference type="InterPro" id="IPR042121">
    <property type="entry name" value="MutL_C_regsub"/>
</dbReference>
<dbReference type="InterPro" id="IPR037198">
    <property type="entry name" value="MutL_C_sf"/>
</dbReference>
<dbReference type="InterPro" id="IPR020568">
    <property type="entry name" value="Ribosomal_Su5_D2-typ_SF"/>
</dbReference>
<dbReference type="InterPro" id="IPR014721">
    <property type="entry name" value="Ribsml_uS5_D2-typ_fold_subgr"/>
</dbReference>
<dbReference type="NCBIfam" id="TIGR00585">
    <property type="entry name" value="mutl"/>
    <property type="match status" value="1"/>
</dbReference>
<dbReference type="NCBIfam" id="NF000950">
    <property type="entry name" value="PRK00095.1-3"/>
    <property type="match status" value="1"/>
</dbReference>
<dbReference type="PANTHER" id="PTHR10073">
    <property type="entry name" value="DNA MISMATCH REPAIR PROTEIN MLH, PMS, MUTL"/>
    <property type="match status" value="1"/>
</dbReference>
<dbReference type="PANTHER" id="PTHR10073:SF12">
    <property type="entry name" value="DNA MISMATCH REPAIR PROTEIN MLH1"/>
    <property type="match status" value="1"/>
</dbReference>
<dbReference type="Pfam" id="PF01119">
    <property type="entry name" value="DNA_mis_repair"/>
    <property type="match status" value="1"/>
</dbReference>
<dbReference type="Pfam" id="PF13589">
    <property type="entry name" value="HATPase_c_3"/>
    <property type="match status" value="1"/>
</dbReference>
<dbReference type="Pfam" id="PF08676">
    <property type="entry name" value="MutL_C"/>
    <property type="match status" value="1"/>
</dbReference>
<dbReference type="SMART" id="SM01340">
    <property type="entry name" value="DNA_mis_repair"/>
    <property type="match status" value="1"/>
</dbReference>
<dbReference type="SMART" id="SM00853">
    <property type="entry name" value="MutL_C"/>
    <property type="match status" value="1"/>
</dbReference>
<dbReference type="SUPFAM" id="SSF55874">
    <property type="entry name" value="ATPase domain of HSP90 chaperone/DNA topoisomerase II/histidine kinase"/>
    <property type="match status" value="1"/>
</dbReference>
<dbReference type="SUPFAM" id="SSF118116">
    <property type="entry name" value="DNA mismatch repair protein MutL"/>
    <property type="match status" value="1"/>
</dbReference>
<dbReference type="SUPFAM" id="SSF54211">
    <property type="entry name" value="Ribosomal protein S5 domain 2-like"/>
    <property type="match status" value="1"/>
</dbReference>
<dbReference type="PROSITE" id="PS00058">
    <property type="entry name" value="DNA_MISMATCH_REPAIR_1"/>
    <property type="match status" value="1"/>
</dbReference>
<protein>
    <recommendedName>
        <fullName evidence="1">DNA mismatch repair protein MutL</fullName>
    </recommendedName>
</protein>
<organism>
    <name type="scientific">Bacillus cereus (strain B4264)</name>
    <dbReference type="NCBI Taxonomy" id="405532"/>
    <lineage>
        <taxon>Bacteria</taxon>
        <taxon>Bacillati</taxon>
        <taxon>Bacillota</taxon>
        <taxon>Bacilli</taxon>
        <taxon>Bacillales</taxon>
        <taxon>Bacillaceae</taxon>
        <taxon>Bacillus</taxon>
        <taxon>Bacillus cereus group</taxon>
    </lineage>
</organism>
<reference key="1">
    <citation type="submission" date="2008-10" db="EMBL/GenBank/DDBJ databases">
        <title>Genome sequence of Bacillus cereus B4264.</title>
        <authorList>
            <person name="Dodson R.J."/>
            <person name="Durkin A.S."/>
            <person name="Rosovitz M.J."/>
            <person name="Rasko D.A."/>
            <person name="Hoffmaster A."/>
            <person name="Ravel J."/>
            <person name="Sutton G."/>
        </authorList>
    </citation>
    <scope>NUCLEOTIDE SEQUENCE [LARGE SCALE GENOMIC DNA]</scope>
    <source>
        <strain>B4264</strain>
    </source>
</reference>
<evidence type="ECO:0000255" key="1">
    <source>
        <dbReference type="HAMAP-Rule" id="MF_00149"/>
    </source>
</evidence>
<evidence type="ECO:0000256" key="2">
    <source>
        <dbReference type="SAM" id="MobiDB-lite"/>
    </source>
</evidence>
<name>MUTL_BACC4</name>
<comment type="function">
    <text evidence="1">This protein is involved in the repair of mismatches in DNA. It is required for dam-dependent methyl-directed DNA mismatch repair. May act as a 'molecular matchmaker', a protein that promotes the formation of a stable complex between two or more DNA-binding proteins in an ATP-dependent manner without itself being part of a final effector complex.</text>
</comment>
<comment type="similarity">
    <text evidence="1">Belongs to the DNA mismatch repair MutL/HexB family.</text>
</comment>
<keyword id="KW-0227">DNA damage</keyword>
<keyword id="KW-0234">DNA repair</keyword>
<gene>
    <name evidence="1" type="primary">mutL</name>
    <name type="ordered locus">BCB4264_A3867</name>
</gene>
<accession>B7HDP3</accession>
<sequence>MGKIRKLDDQLSNLIAAGEVVERPASVVKELVENSIDANSTSIEIHLEEAGLSKIRIIDNGDGIAEEDCIVAFERHATSKIKDENDLFRIRTLGFRGEALPSIASVSELELITSTGDAPGTHLIIKGGDIIKQEKTASRKGTDITVQNLFFNTPARLKYMKTIHTELGNITDIVYRIAMSHPEVSLKLFHNEKKLLHTSGNGDVRQVLASIYSIQVAKKLVPIEAESLDFTIKGYVTLPEVTRASRNYMSTIVNGRYVRNFVLMKAIQQGYHTLLPVGRYPIGFLSIEMDPMLVDVNVHPAKLEVRFSKEQELLKLIEETLQAAFKKIQLIPDAGVTTKKKEKDESVQEQFQFEHAKPKEPSMPDIVLPTGMDAKQEEPQAVKQPPQLWQPPKQEWQPPQSLIREEQSWQPSTKPIIEEPIQEEKSWDSNEEDFELEELEEEVREIKEIEMNGNDLPPLYPIGQMHGTYIFAQNDKGLYMIDQHAAQERINYEYFRDKVGRVAQEVQELLVPYRIDLSLTEFLRVEEQLEELKKVGLFLEQFGHQSFIVRSHPTWFPKGQETEIIDEMMEQVVKLKKVDIKKLREEAAIMMSCKASIKANQYLTNDQIFALLEELRTTTNPYTCPHGRPILVHHSTYELEKMFKRVM</sequence>
<proteinExistence type="inferred from homology"/>
<feature type="chain" id="PRO_1000192159" description="DNA mismatch repair protein MutL">
    <location>
        <begin position="1"/>
        <end position="647"/>
    </location>
</feature>
<feature type="region of interest" description="Disordered" evidence="2">
    <location>
        <begin position="375"/>
        <end position="395"/>
    </location>
</feature>
<feature type="compositionally biased region" description="Low complexity" evidence="2">
    <location>
        <begin position="383"/>
        <end position="395"/>
    </location>
</feature>